<protein>
    <recommendedName>
        <fullName>Thioredoxin M5, chloroplastic</fullName>
        <shortName>OsTrxm5</shortName>
    </recommendedName>
</protein>
<reference key="1">
    <citation type="submission" date="1998-04" db="EMBL/GenBank/DDBJ databases">
        <title>The thioredoxins m and f of plants and their role in the redox regulation of chloroplast enxymes.</title>
        <authorList>
            <person name="Dyer T.A."/>
            <person name="Catley M.A."/>
            <person name="Robertson E.J."/>
            <person name="Dunford R.P."/>
        </authorList>
    </citation>
    <scope>NUCLEOTIDE SEQUENCE [MRNA]</scope>
</reference>
<reference key="2">
    <citation type="journal article" date="2005" name="BMC Biol.">
        <title>The sequence of rice chromosomes 11 and 12, rich in disease resistance genes and recent gene duplications.</title>
        <authorList>
            <consortium name="The rice chromosomes 11 and 12 sequencing consortia"/>
        </authorList>
    </citation>
    <scope>NUCLEOTIDE SEQUENCE [LARGE SCALE GENOMIC DNA]</scope>
    <source>
        <strain>cv. Nipponbare</strain>
    </source>
</reference>
<reference key="3">
    <citation type="journal article" date="2005" name="Nature">
        <title>The map-based sequence of the rice genome.</title>
        <authorList>
            <consortium name="International rice genome sequencing project (IRGSP)"/>
        </authorList>
    </citation>
    <scope>NUCLEOTIDE SEQUENCE [LARGE SCALE GENOMIC DNA]</scope>
    <source>
        <strain>cv. Nipponbare</strain>
    </source>
</reference>
<reference key="4">
    <citation type="journal article" date="2008" name="Nucleic Acids Res.">
        <title>The rice annotation project database (RAP-DB): 2008 update.</title>
        <authorList>
            <consortium name="The rice annotation project (RAP)"/>
        </authorList>
    </citation>
    <scope>GENOME REANNOTATION</scope>
    <source>
        <strain>cv. Nipponbare</strain>
    </source>
</reference>
<reference key="5">
    <citation type="journal article" date="2013" name="Rice">
        <title>Improvement of the Oryza sativa Nipponbare reference genome using next generation sequence and optical map data.</title>
        <authorList>
            <person name="Kawahara Y."/>
            <person name="de la Bastide M."/>
            <person name="Hamilton J.P."/>
            <person name="Kanamori H."/>
            <person name="McCombie W.R."/>
            <person name="Ouyang S."/>
            <person name="Schwartz D.C."/>
            <person name="Tanaka T."/>
            <person name="Wu J."/>
            <person name="Zhou S."/>
            <person name="Childs K.L."/>
            <person name="Davidson R.M."/>
            <person name="Lin H."/>
            <person name="Quesada-Ocampo L."/>
            <person name="Vaillancourt B."/>
            <person name="Sakai H."/>
            <person name="Lee S.S."/>
            <person name="Kim J."/>
            <person name="Numa H."/>
            <person name="Itoh T."/>
            <person name="Buell C.R."/>
            <person name="Matsumoto T."/>
        </authorList>
    </citation>
    <scope>GENOME REANNOTATION</scope>
    <source>
        <strain>cv. Nipponbare</strain>
    </source>
</reference>
<reference key="6">
    <citation type="journal article" date="2003" name="Science">
        <title>Collection, mapping, and annotation of over 28,000 cDNA clones from japonica rice.</title>
        <authorList>
            <consortium name="The rice full-length cDNA consortium"/>
        </authorList>
    </citation>
    <scope>NUCLEOTIDE SEQUENCE [LARGE SCALE MRNA]</scope>
    <source>
        <strain>cv. Nipponbare</strain>
    </source>
</reference>
<reference key="7">
    <citation type="journal article" date="2008" name="Plant Physiol.">
        <title>Abnormal chloroplast development and growth inhibition in rice thioredoxin m knock-down plants.</title>
        <authorList>
            <person name="Chi Y.H."/>
            <person name="Moon J.C."/>
            <person name="Park J.H."/>
            <person name="Kim H.S."/>
            <person name="Zulfugarov I.S."/>
            <person name="Fanata W.I."/>
            <person name="Jang H.H."/>
            <person name="Lee J.R."/>
            <person name="Lee Y.M."/>
            <person name="Kim S.T."/>
            <person name="Chung Y.Y."/>
            <person name="Lim C.O."/>
            <person name="Kim J.Y."/>
            <person name="Yun D.J."/>
            <person name="Lee C.H."/>
            <person name="Lee K.O."/>
            <person name="Lee S.Y."/>
        </authorList>
    </citation>
    <scope>FUNCTION</scope>
    <scope>SUBCELLULAR LOCATION</scope>
    <scope>TISSUE SPECIFICITY</scope>
    <scope>INDUCTION</scope>
    <scope>DISRUPTION PHENOTYPE</scope>
</reference>
<reference key="8">
    <citation type="journal article" date="2009" name="Mol. Plant">
        <title>Comparative genomic study of the thioredoxin family in photosynthetic organisms with emphasis on Populus trichocarpa.</title>
        <authorList>
            <person name="Chibani K."/>
            <person name="Wingsle G."/>
            <person name="Jacquot J.P."/>
            <person name="Gelhaye E."/>
            <person name="Rouhier N."/>
        </authorList>
    </citation>
    <scope>GENE FAMILY</scope>
    <scope>NOMENCLATURE</scope>
</reference>
<name>TRXM5_ORYSJ</name>
<sequence length="172" mass="18529">MALETCFRAWATLHAPQPPSSGGSRDRLLLSGAGSSQSKPRLSVASPSPLRPASRFACQCSNVVDEVVVADEKNWDSMVLGSEAPVLVEFWAPWCGPCRMIAPVIDELAKEYVGKIKCCKVNTDDSPNIATNYGIRSIPTVLMFKNGEKKESVIGAVPKTTLATIIDKYVSS</sequence>
<dbReference type="EMBL" id="AJ005841">
    <property type="protein sequence ID" value="CAA06736.1"/>
    <property type="molecule type" value="mRNA"/>
</dbReference>
<dbReference type="EMBL" id="DP000011">
    <property type="protein sequence ID" value="ABA96018.2"/>
    <property type="molecule type" value="Genomic_DNA"/>
</dbReference>
<dbReference type="EMBL" id="AP008218">
    <property type="protein sequence ID" value="BAH95554.1"/>
    <property type="molecule type" value="Genomic_DNA"/>
</dbReference>
<dbReference type="EMBL" id="AP014968">
    <property type="protein sequence ID" value="BAT16187.1"/>
    <property type="molecule type" value="Genomic_DNA"/>
</dbReference>
<dbReference type="EMBL" id="AK061678">
    <property type="protein sequence ID" value="BAG88053.1"/>
    <property type="molecule type" value="mRNA"/>
</dbReference>
<dbReference type="RefSeq" id="XP_015620324.1">
    <property type="nucleotide sequence ID" value="XM_015764838.1"/>
</dbReference>
<dbReference type="SMR" id="Q9ZP20"/>
<dbReference type="FunCoup" id="Q9ZP20">
    <property type="interactions" value="872"/>
</dbReference>
<dbReference type="STRING" id="39947.Q9ZP20"/>
<dbReference type="PaxDb" id="39947-Q9ZP20"/>
<dbReference type="EnsemblPlants" id="Os12t0188700-02">
    <property type="protein sequence ID" value="Os12t0188700-02"/>
    <property type="gene ID" value="Os12g0188700"/>
</dbReference>
<dbReference type="Gramene" id="Os12t0188700-02">
    <property type="protein sequence ID" value="Os12t0188700-02"/>
    <property type="gene ID" value="Os12g0188700"/>
</dbReference>
<dbReference type="KEGG" id="dosa:Os12g0188700"/>
<dbReference type="eggNOG" id="KOG0910">
    <property type="taxonomic scope" value="Eukaryota"/>
</dbReference>
<dbReference type="HOGENOM" id="CLU_090389_0_2_1"/>
<dbReference type="InParanoid" id="Q9ZP20"/>
<dbReference type="OMA" id="AKATQKC"/>
<dbReference type="OrthoDB" id="2121326at2759"/>
<dbReference type="Proteomes" id="UP000000763">
    <property type="component" value="Chromosome 12"/>
</dbReference>
<dbReference type="Proteomes" id="UP000059680">
    <property type="component" value="Chromosome 12"/>
</dbReference>
<dbReference type="ExpressionAtlas" id="Q9ZP20">
    <property type="expression patterns" value="baseline and differential"/>
</dbReference>
<dbReference type="GO" id="GO:0009507">
    <property type="term" value="C:chloroplast"/>
    <property type="evidence" value="ECO:0000314"/>
    <property type="project" value="UniProtKB"/>
</dbReference>
<dbReference type="GO" id="GO:0005737">
    <property type="term" value="C:cytoplasm"/>
    <property type="evidence" value="ECO:0000318"/>
    <property type="project" value="GO_Central"/>
</dbReference>
<dbReference type="GO" id="GO:0015035">
    <property type="term" value="F:protein-disulfide reductase activity"/>
    <property type="evidence" value="ECO:0000314"/>
    <property type="project" value="UniProtKB"/>
</dbReference>
<dbReference type="GO" id="GO:0042744">
    <property type="term" value="P:hydrogen peroxide catabolic process"/>
    <property type="evidence" value="ECO:0000315"/>
    <property type="project" value="UniProtKB"/>
</dbReference>
<dbReference type="GO" id="GO:0009657">
    <property type="term" value="P:plastid organization"/>
    <property type="evidence" value="ECO:0000315"/>
    <property type="project" value="UniProtKB"/>
</dbReference>
<dbReference type="CDD" id="cd02947">
    <property type="entry name" value="TRX_family"/>
    <property type="match status" value="1"/>
</dbReference>
<dbReference type="FunFam" id="3.40.30.10:FF:000001">
    <property type="entry name" value="Thioredoxin"/>
    <property type="match status" value="1"/>
</dbReference>
<dbReference type="Gene3D" id="3.40.30.10">
    <property type="entry name" value="Glutaredoxin"/>
    <property type="match status" value="1"/>
</dbReference>
<dbReference type="InterPro" id="IPR005746">
    <property type="entry name" value="Thioredoxin"/>
</dbReference>
<dbReference type="InterPro" id="IPR036249">
    <property type="entry name" value="Thioredoxin-like_sf"/>
</dbReference>
<dbReference type="InterPro" id="IPR017937">
    <property type="entry name" value="Thioredoxin_CS"/>
</dbReference>
<dbReference type="InterPro" id="IPR013766">
    <property type="entry name" value="Thioredoxin_domain"/>
</dbReference>
<dbReference type="NCBIfam" id="TIGR01068">
    <property type="entry name" value="thioredoxin"/>
    <property type="match status" value="1"/>
</dbReference>
<dbReference type="PANTHER" id="PTHR45663">
    <property type="entry name" value="GEO12009P1"/>
    <property type="match status" value="1"/>
</dbReference>
<dbReference type="PANTHER" id="PTHR45663:SF42">
    <property type="entry name" value="THIOREDOXIN M5, CHLOROPLASTIC"/>
    <property type="match status" value="1"/>
</dbReference>
<dbReference type="Pfam" id="PF00085">
    <property type="entry name" value="Thioredoxin"/>
    <property type="match status" value="1"/>
</dbReference>
<dbReference type="PRINTS" id="PR00421">
    <property type="entry name" value="THIOREDOXIN"/>
</dbReference>
<dbReference type="SUPFAM" id="SSF52833">
    <property type="entry name" value="Thioredoxin-like"/>
    <property type="match status" value="1"/>
</dbReference>
<dbReference type="PROSITE" id="PS00194">
    <property type="entry name" value="THIOREDOXIN_1"/>
    <property type="match status" value="1"/>
</dbReference>
<dbReference type="PROSITE" id="PS51352">
    <property type="entry name" value="THIOREDOXIN_2"/>
    <property type="match status" value="1"/>
</dbReference>
<feature type="transit peptide" description="Chloroplast" evidence="2">
    <location>
        <begin position="1"/>
        <end position="59"/>
    </location>
</feature>
<feature type="chain" id="PRO_0000034176" description="Thioredoxin M5, chloroplastic">
    <location>
        <begin position="60"/>
        <end position="172"/>
    </location>
</feature>
<feature type="domain" description="Thioredoxin" evidence="3">
    <location>
        <begin position="60"/>
        <end position="171"/>
    </location>
</feature>
<feature type="region of interest" description="Disordered" evidence="4">
    <location>
        <begin position="17"/>
        <end position="47"/>
    </location>
</feature>
<feature type="active site" description="Nucleophile" evidence="1">
    <location>
        <position position="95"/>
    </location>
</feature>
<feature type="active site" description="Nucleophile" evidence="1">
    <location>
        <position position="98"/>
    </location>
</feature>
<feature type="site" description="Contributes to redox potential value" evidence="1">
    <location>
        <position position="96"/>
    </location>
</feature>
<feature type="site" description="Contributes to redox potential value" evidence="1">
    <location>
        <position position="97"/>
    </location>
</feature>
<feature type="disulfide bond" description="Redox-active" evidence="3">
    <location>
        <begin position="95"/>
        <end position="98"/>
    </location>
</feature>
<accession>Q9ZP20</accession>
<accession>A0A0P0Y7N8</accession>
<accession>B7E6Q6</accession>
<accession>Q2QWN9</accession>
<comment type="function">
    <text evidence="5">Thiol-disulfide oxidoreductase probably involved in the redox regulation of chloroplastic enzymes. Required for chloroplast biogenesis and differentiation. Functions as an electron donor for plastidial 2-Cys peroxiredoxins and participates in hydrogen peroxide scavenging system in chloroplasts. Possesses reducing activity towards insulin disulfide bonds.</text>
</comment>
<comment type="subcellular location">
    <subcellularLocation>
        <location evidence="5">Plastid</location>
        <location evidence="5">Chloroplast</location>
    </subcellularLocation>
</comment>
<comment type="tissue specificity">
    <text evidence="5">Expressed in leaves and at lower levels in flowers.</text>
</comment>
<comment type="induction">
    <text evidence="5">By de-etiolation.</text>
</comment>
<comment type="disruption phenotype">
    <text evidence="5">Semi-dwarf plants with pale-green leaves, abnormal chloroplasts, reduced carotenoid and chlorophyll content and increased hydrogen peroxide levels.</text>
</comment>
<comment type="similarity">
    <text evidence="6">Belongs to the thioredoxin family. Plant M-type subfamily.</text>
</comment>
<keyword id="KW-0150">Chloroplast</keyword>
<keyword id="KW-1015">Disulfide bond</keyword>
<keyword id="KW-0249">Electron transport</keyword>
<keyword id="KW-0934">Plastid</keyword>
<keyword id="KW-0676">Redox-active center</keyword>
<keyword id="KW-1185">Reference proteome</keyword>
<keyword id="KW-0809">Transit peptide</keyword>
<keyword id="KW-0813">Transport</keyword>
<proteinExistence type="evidence at transcript level"/>
<organism>
    <name type="scientific">Oryza sativa subsp. japonica</name>
    <name type="common">Rice</name>
    <dbReference type="NCBI Taxonomy" id="39947"/>
    <lineage>
        <taxon>Eukaryota</taxon>
        <taxon>Viridiplantae</taxon>
        <taxon>Streptophyta</taxon>
        <taxon>Embryophyta</taxon>
        <taxon>Tracheophyta</taxon>
        <taxon>Spermatophyta</taxon>
        <taxon>Magnoliopsida</taxon>
        <taxon>Liliopsida</taxon>
        <taxon>Poales</taxon>
        <taxon>Poaceae</taxon>
        <taxon>BOP clade</taxon>
        <taxon>Oryzoideae</taxon>
        <taxon>Oryzeae</taxon>
        <taxon>Oryzinae</taxon>
        <taxon>Oryza</taxon>
        <taxon>Oryza sativa</taxon>
    </lineage>
</organism>
<gene>
    <name type="primary">TRXM</name>
    <name type="ordered locus">Os12g0188700</name>
    <name type="ordered locus">LOC_Os12g08730</name>
</gene>
<evidence type="ECO:0000250" key="1"/>
<evidence type="ECO:0000255" key="2"/>
<evidence type="ECO:0000255" key="3">
    <source>
        <dbReference type="PROSITE-ProRule" id="PRU00691"/>
    </source>
</evidence>
<evidence type="ECO:0000256" key="4">
    <source>
        <dbReference type="SAM" id="MobiDB-lite"/>
    </source>
</evidence>
<evidence type="ECO:0000269" key="5">
    <source>
    </source>
</evidence>
<evidence type="ECO:0000305" key="6"/>